<organism>
    <name type="scientific">Mus musculus</name>
    <name type="common">Mouse</name>
    <dbReference type="NCBI Taxonomy" id="10090"/>
    <lineage>
        <taxon>Eukaryota</taxon>
        <taxon>Metazoa</taxon>
        <taxon>Chordata</taxon>
        <taxon>Craniata</taxon>
        <taxon>Vertebrata</taxon>
        <taxon>Euteleostomi</taxon>
        <taxon>Mammalia</taxon>
        <taxon>Eutheria</taxon>
        <taxon>Euarchontoglires</taxon>
        <taxon>Glires</taxon>
        <taxon>Rodentia</taxon>
        <taxon>Myomorpha</taxon>
        <taxon>Muroidea</taxon>
        <taxon>Muridae</taxon>
        <taxon>Murinae</taxon>
        <taxon>Mus</taxon>
        <taxon>Mus</taxon>
    </lineage>
</organism>
<reference key="1">
    <citation type="journal article" date="2005" name="Science">
        <title>The transcriptional landscape of the mammalian genome.</title>
        <authorList>
            <person name="Carninci P."/>
            <person name="Kasukawa T."/>
            <person name="Katayama S."/>
            <person name="Gough J."/>
            <person name="Frith M.C."/>
            <person name="Maeda N."/>
            <person name="Oyama R."/>
            <person name="Ravasi T."/>
            <person name="Lenhard B."/>
            <person name="Wells C."/>
            <person name="Kodzius R."/>
            <person name="Shimokawa K."/>
            <person name="Bajic V.B."/>
            <person name="Brenner S.E."/>
            <person name="Batalov S."/>
            <person name="Forrest A.R."/>
            <person name="Zavolan M."/>
            <person name="Davis M.J."/>
            <person name="Wilming L.G."/>
            <person name="Aidinis V."/>
            <person name="Allen J.E."/>
            <person name="Ambesi-Impiombato A."/>
            <person name="Apweiler R."/>
            <person name="Aturaliya R.N."/>
            <person name="Bailey T.L."/>
            <person name="Bansal M."/>
            <person name="Baxter L."/>
            <person name="Beisel K.W."/>
            <person name="Bersano T."/>
            <person name="Bono H."/>
            <person name="Chalk A.M."/>
            <person name="Chiu K.P."/>
            <person name="Choudhary V."/>
            <person name="Christoffels A."/>
            <person name="Clutterbuck D.R."/>
            <person name="Crowe M.L."/>
            <person name="Dalla E."/>
            <person name="Dalrymple B.P."/>
            <person name="de Bono B."/>
            <person name="Della Gatta G."/>
            <person name="di Bernardo D."/>
            <person name="Down T."/>
            <person name="Engstrom P."/>
            <person name="Fagiolini M."/>
            <person name="Faulkner G."/>
            <person name="Fletcher C.F."/>
            <person name="Fukushima T."/>
            <person name="Furuno M."/>
            <person name="Futaki S."/>
            <person name="Gariboldi M."/>
            <person name="Georgii-Hemming P."/>
            <person name="Gingeras T.R."/>
            <person name="Gojobori T."/>
            <person name="Green R.E."/>
            <person name="Gustincich S."/>
            <person name="Harbers M."/>
            <person name="Hayashi Y."/>
            <person name="Hensch T.K."/>
            <person name="Hirokawa N."/>
            <person name="Hill D."/>
            <person name="Huminiecki L."/>
            <person name="Iacono M."/>
            <person name="Ikeo K."/>
            <person name="Iwama A."/>
            <person name="Ishikawa T."/>
            <person name="Jakt M."/>
            <person name="Kanapin A."/>
            <person name="Katoh M."/>
            <person name="Kawasawa Y."/>
            <person name="Kelso J."/>
            <person name="Kitamura H."/>
            <person name="Kitano H."/>
            <person name="Kollias G."/>
            <person name="Krishnan S.P."/>
            <person name="Kruger A."/>
            <person name="Kummerfeld S.K."/>
            <person name="Kurochkin I.V."/>
            <person name="Lareau L.F."/>
            <person name="Lazarevic D."/>
            <person name="Lipovich L."/>
            <person name="Liu J."/>
            <person name="Liuni S."/>
            <person name="McWilliam S."/>
            <person name="Madan Babu M."/>
            <person name="Madera M."/>
            <person name="Marchionni L."/>
            <person name="Matsuda H."/>
            <person name="Matsuzawa S."/>
            <person name="Miki H."/>
            <person name="Mignone F."/>
            <person name="Miyake S."/>
            <person name="Morris K."/>
            <person name="Mottagui-Tabar S."/>
            <person name="Mulder N."/>
            <person name="Nakano N."/>
            <person name="Nakauchi H."/>
            <person name="Ng P."/>
            <person name="Nilsson R."/>
            <person name="Nishiguchi S."/>
            <person name="Nishikawa S."/>
            <person name="Nori F."/>
            <person name="Ohara O."/>
            <person name="Okazaki Y."/>
            <person name="Orlando V."/>
            <person name="Pang K.C."/>
            <person name="Pavan W.J."/>
            <person name="Pavesi G."/>
            <person name="Pesole G."/>
            <person name="Petrovsky N."/>
            <person name="Piazza S."/>
            <person name="Reed J."/>
            <person name="Reid J.F."/>
            <person name="Ring B.Z."/>
            <person name="Ringwald M."/>
            <person name="Rost B."/>
            <person name="Ruan Y."/>
            <person name="Salzberg S.L."/>
            <person name="Sandelin A."/>
            <person name="Schneider C."/>
            <person name="Schoenbach C."/>
            <person name="Sekiguchi K."/>
            <person name="Semple C.A."/>
            <person name="Seno S."/>
            <person name="Sessa L."/>
            <person name="Sheng Y."/>
            <person name="Shibata Y."/>
            <person name="Shimada H."/>
            <person name="Shimada K."/>
            <person name="Silva D."/>
            <person name="Sinclair B."/>
            <person name="Sperling S."/>
            <person name="Stupka E."/>
            <person name="Sugiura K."/>
            <person name="Sultana R."/>
            <person name="Takenaka Y."/>
            <person name="Taki K."/>
            <person name="Tammoja K."/>
            <person name="Tan S.L."/>
            <person name="Tang S."/>
            <person name="Taylor M.S."/>
            <person name="Tegner J."/>
            <person name="Teichmann S.A."/>
            <person name="Ueda H.R."/>
            <person name="van Nimwegen E."/>
            <person name="Verardo R."/>
            <person name="Wei C.L."/>
            <person name="Yagi K."/>
            <person name="Yamanishi H."/>
            <person name="Zabarovsky E."/>
            <person name="Zhu S."/>
            <person name="Zimmer A."/>
            <person name="Hide W."/>
            <person name="Bult C."/>
            <person name="Grimmond S.M."/>
            <person name="Teasdale R.D."/>
            <person name="Liu E.T."/>
            <person name="Brusic V."/>
            <person name="Quackenbush J."/>
            <person name="Wahlestedt C."/>
            <person name="Mattick J.S."/>
            <person name="Hume D.A."/>
            <person name="Kai C."/>
            <person name="Sasaki D."/>
            <person name="Tomaru Y."/>
            <person name="Fukuda S."/>
            <person name="Kanamori-Katayama M."/>
            <person name="Suzuki M."/>
            <person name="Aoki J."/>
            <person name="Arakawa T."/>
            <person name="Iida J."/>
            <person name="Imamura K."/>
            <person name="Itoh M."/>
            <person name="Kato T."/>
            <person name="Kawaji H."/>
            <person name="Kawagashira N."/>
            <person name="Kawashima T."/>
            <person name="Kojima M."/>
            <person name="Kondo S."/>
            <person name="Konno H."/>
            <person name="Nakano K."/>
            <person name="Ninomiya N."/>
            <person name="Nishio T."/>
            <person name="Okada M."/>
            <person name="Plessy C."/>
            <person name="Shibata K."/>
            <person name="Shiraki T."/>
            <person name="Suzuki S."/>
            <person name="Tagami M."/>
            <person name="Waki K."/>
            <person name="Watahiki A."/>
            <person name="Okamura-Oho Y."/>
            <person name="Suzuki H."/>
            <person name="Kawai J."/>
            <person name="Hayashizaki Y."/>
        </authorList>
    </citation>
    <scope>NUCLEOTIDE SEQUENCE [LARGE SCALE MRNA]</scope>
    <source>
        <strain>C57BL/6J</strain>
        <tissue>Kidney</tissue>
    </source>
</reference>
<reference key="2">
    <citation type="journal article" date="2004" name="Genome Res.">
        <title>The status, quality, and expansion of the NIH full-length cDNA project: the Mammalian Gene Collection (MGC).</title>
        <authorList>
            <consortium name="The MGC Project Team"/>
        </authorList>
    </citation>
    <scope>NUCLEOTIDE SEQUENCE [LARGE SCALE MRNA]</scope>
    <source>
        <strain>FVB/N</strain>
        <tissue>Mammary tumor</tissue>
    </source>
</reference>
<reference key="3">
    <citation type="journal article" date="2007" name="Exp. Cell Res.">
        <title>Role of cofactors B (TBCB) and E (TBCE) in tubulin heterodimer dissociation.</title>
        <authorList>
            <person name="Kortazar D."/>
            <person name="Fanarraga M.L."/>
            <person name="Carranza G."/>
            <person name="Bellido J."/>
            <person name="Villegas J.C."/>
            <person name="Avila J."/>
            <person name="Zabala J.C."/>
        </authorList>
    </citation>
    <scope>FUNCTION</scope>
    <scope>INTERACTION WITH TBCE</scope>
</reference>
<reference key="4">
    <citation type="journal article" date="2007" name="J. Immunol.">
        <title>Quantitative time-resolved phosphoproteomic analysis of mast cell signaling.</title>
        <authorList>
            <person name="Cao L."/>
            <person name="Yu K."/>
            <person name="Banh C."/>
            <person name="Nguyen V."/>
            <person name="Ritz A."/>
            <person name="Raphael B.J."/>
            <person name="Kawakami Y."/>
            <person name="Kawakami T."/>
            <person name="Salomon A.R."/>
        </authorList>
    </citation>
    <scope>PHOSPHORYLATION [LARGE SCALE ANALYSIS] AT TYR-98</scope>
    <scope>IDENTIFICATION BY MASS SPECTROMETRY [LARGE SCALE ANALYSIS]</scope>
    <source>
        <tissue>Mast cell</tissue>
    </source>
</reference>
<reference key="5">
    <citation type="journal article" date="2007" name="J. Neurochem.">
        <title>Tubulin cofactor B plays a role in the neuronal growth cone.</title>
        <authorList>
            <person name="Lopez-Fanarraga M."/>
            <person name="Carranza G."/>
            <person name="Bellido J."/>
            <person name="Kortazar D."/>
            <person name="Villegas J.C."/>
            <person name="Zabala J.C."/>
        </authorList>
    </citation>
    <scope>FUNCTION</scope>
    <scope>SUBCELLULAR LOCATION</scope>
    <scope>TISSUE SPECIFICITY</scope>
    <scope>DEVELOPMENTAL STAGE</scope>
    <scope>DISRUPTION PHENOTYPE</scope>
</reference>
<reference key="6">
    <citation type="journal article" date="2010" name="Cell">
        <title>A tissue-specific atlas of mouse protein phosphorylation and expression.</title>
        <authorList>
            <person name="Huttlin E.L."/>
            <person name="Jedrychowski M.P."/>
            <person name="Elias J.E."/>
            <person name="Goswami T."/>
            <person name="Rad R."/>
            <person name="Beausoleil S.A."/>
            <person name="Villen J."/>
            <person name="Haas W."/>
            <person name="Sowa M.E."/>
            <person name="Gygi S.P."/>
        </authorList>
    </citation>
    <scope>PHOSPHORYLATION [LARGE SCALE ANALYSIS] AT SER-110</scope>
    <scope>IDENTIFICATION BY MASS SPECTROMETRY [LARGE SCALE ANALYSIS]</scope>
    <source>
        <tissue>Brain</tissue>
        <tissue>Brown adipose tissue</tissue>
        <tissue>Heart</tissue>
        <tissue>Kidney</tissue>
        <tissue>Liver</tissue>
        <tissue>Lung</tissue>
        <tissue>Pancreas</tissue>
        <tissue>Spleen</tissue>
        <tissue>Testis</tissue>
    </source>
</reference>
<reference key="7">
    <citation type="submission" date="2003-11" db="PDB data bank">
        <title>Solution structure of a N-terminal ubiquitin-like domain in mouse tubulin-specific chaperone B.</title>
        <authorList>
            <consortium name="RIKEN structural genomics initiative (RSGI)"/>
        </authorList>
    </citation>
    <scope>STRUCTURE BY NMR OF 11-92</scope>
</reference>
<reference key="8">
    <citation type="submission" date="2003-11" db="PDB data bank">
        <title>Solution structure of the CAP-Gly domain in mouse tubulin-specific chaperone B.</title>
        <authorList>
            <consortium name="RIKEN structural genomics initiative (RSGI)"/>
        </authorList>
    </citation>
    <scope>STRUCTURE BY NMR OF 134-233</scope>
</reference>
<keyword id="KW-0002">3D-structure</keyword>
<keyword id="KW-0007">Acetylation</keyword>
<keyword id="KW-0143">Chaperone</keyword>
<keyword id="KW-0963">Cytoplasm</keyword>
<keyword id="KW-0206">Cytoskeleton</keyword>
<keyword id="KW-0217">Developmental protein</keyword>
<keyword id="KW-0221">Differentiation</keyword>
<keyword id="KW-0493">Microtubule</keyword>
<keyword id="KW-0524">Neurogenesis</keyword>
<keyword id="KW-0597">Phosphoprotein</keyword>
<keyword id="KW-1185">Reference proteome</keyword>
<keyword id="KW-0832">Ubl conjugation</keyword>
<dbReference type="EMBL" id="AK002316">
    <property type="protein sequence ID" value="BAB22009.1"/>
    <property type="molecule type" value="mRNA"/>
</dbReference>
<dbReference type="EMBL" id="AK003655">
    <property type="protein sequence ID" value="BAB22918.2"/>
    <property type="molecule type" value="mRNA"/>
</dbReference>
<dbReference type="EMBL" id="AK010438">
    <property type="protein sequence ID" value="BAB26939.1"/>
    <property type="molecule type" value="mRNA"/>
</dbReference>
<dbReference type="EMBL" id="BC010684">
    <property type="protein sequence ID" value="AAH10684.1"/>
    <property type="molecule type" value="mRNA"/>
</dbReference>
<dbReference type="CCDS" id="CCDS21083.1"/>
<dbReference type="RefSeq" id="NP_079824.2">
    <property type="nucleotide sequence ID" value="NM_025548.4"/>
</dbReference>
<dbReference type="PDB" id="1V6E">
    <property type="method" value="NMR"/>
    <property type="chains" value="A=11-92"/>
</dbReference>
<dbReference type="PDB" id="1WHG">
    <property type="method" value="NMR"/>
    <property type="chains" value="A=134-233"/>
</dbReference>
<dbReference type="PDBsum" id="1V6E"/>
<dbReference type="PDBsum" id="1WHG"/>
<dbReference type="BMRB" id="Q9D1E6"/>
<dbReference type="SMR" id="Q9D1E6"/>
<dbReference type="BioGRID" id="211455">
    <property type="interactions" value="21"/>
</dbReference>
<dbReference type="FunCoup" id="Q9D1E6">
    <property type="interactions" value="3021"/>
</dbReference>
<dbReference type="IntAct" id="Q9D1E6">
    <property type="interactions" value="3"/>
</dbReference>
<dbReference type="MINT" id="Q9D1E6"/>
<dbReference type="STRING" id="10090.ENSMUSP00000006254"/>
<dbReference type="GlyGen" id="Q9D1E6">
    <property type="glycosylation" value="1 site"/>
</dbReference>
<dbReference type="iPTMnet" id="Q9D1E6"/>
<dbReference type="PhosphoSitePlus" id="Q9D1E6"/>
<dbReference type="SwissPalm" id="Q9D1E6"/>
<dbReference type="jPOST" id="Q9D1E6"/>
<dbReference type="PaxDb" id="10090-ENSMUSP00000006254"/>
<dbReference type="PeptideAtlas" id="Q9D1E6"/>
<dbReference type="ProteomicsDB" id="263133"/>
<dbReference type="Pumba" id="Q9D1E6"/>
<dbReference type="Antibodypedia" id="29702">
    <property type="antibodies" value="288 antibodies from 29 providers"/>
</dbReference>
<dbReference type="DNASU" id="66411"/>
<dbReference type="Ensembl" id="ENSMUST00000006254.6">
    <property type="protein sequence ID" value="ENSMUSP00000006254.6"/>
    <property type="gene ID" value="ENSMUSG00000006095.13"/>
</dbReference>
<dbReference type="GeneID" id="66411"/>
<dbReference type="KEGG" id="mmu:66411"/>
<dbReference type="UCSC" id="uc009gds.2">
    <property type="organism name" value="mouse"/>
</dbReference>
<dbReference type="AGR" id="MGI:1913661"/>
<dbReference type="CTD" id="1155"/>
<dbReference type="MGI" id="MGI:1913661">
    <property type="gene designation" value="Tbcb"/>
</dbReference>
<dbReference type="VEuPathDB" id="HostDB:ENSMUSG00000006095"/>
<dbReference type="eggNOG" id="KOG3206">
    <property type="taxonomic scope" value="Eukaryota"/>
</dbReference>
<dbReference type="GeneTree" id="ENSGT00940000156119"/>
<dbReference type="HOGENOM" id="CLU_067577_0_0_1"/>
<dbReference type="InParanoid" id="Q9D1E6"/>
<dbReference type="OMA" id="DQYEQRT"/>
<dbReference type="OrthoDB" id="5295208at2759"/>
<dbReference type="PhylomeDB" id="Q9D1E6"/>
<dbReference type="TreeFam" id="TF313444"/>
<dbReference type="BioGRID-ORCS" id="66411">
    <property type="hits" value="28 hits in 82 CRISPR screens"/>
</dbReference>
<dbReference type="ChiTaRS" id="Tbcb">
    <property type="organism name" value="mouse"/>
</dbReference>
<dbReference type="EvolutionaryTrace" id="Q9D1E6"/>
<dbReference type="PRO" id="PR:Q9D1E6"/>
<dbReference type="Proteomes" id="UP000000589">
    <property type="component" value="Chromosome 7"/>
</dbReference>
<dbReference type="RNAct" id="Q9D1E6">
    <property type="molecule type" value="protein"/>
</dbReference>
<dbReference type="Bgee" id="ENSMUSG00000006095">
    <property type="expression patterns" value="Expressed in facial nucleus and 261 other cell types or tissues"/>
</dbReference>
<dbReference type="GO" id="GO:0005737">
    <property type="term" value="C:cytoplasm"/>
    <property type="evidence" value="ECO:0000250"/>
    <property type="project" value="UniProtKB"/>
</dbReference>
<dbReference type="GO" id="GO:0005829">
    <property type="term" value="C:cytosol"/>
    <property type="evidence" value="ECO:0007669"/>
    <property type="project" value="Ensembl"/>
</dbReference>
<dbReference type="GO" id="GO:0005874">
    <property type="term" value="C:microtubule"/>
    <property type="evidence" value="ECO:0007669"/>
    <property type="project" value="UniProtKB-KW"/>
</dbReference>
<dbReference type="GO" id="GO:0043014">
    <property type="term" value="F:alpha-tubulin binding"/>
    <property type="evidence" value="ECO:0007669"/>
    <property type="project" value="InterPro"/>
</dbReference>
<dbReference type="GO" id="GO:0030154">
    <property type="term" value="P:cell differentiation"/>
    <property type="evidence" value="ECO:0007669"/>
    <property type="project" value="UniProtKB-KW"/>
</dbReference>
<dbReference type="GO" id="GO:0007399">
    <property type="term" value="P:nervous system development"/>
    <property type="evidence" value="ECO:0007669"/>
    <property type="project" value="UniProtKB-KW"/>
</dbReference>
<dbReference type="GO" id="GO:0007023">
    <property type="term" value="P:post-chaperonin tubulin folding pathway"/>
    <property type="evidence" value="ECO:0007669"/>
    <property type="project" value="InterPro"/>
</dbReference>
<dbReference type="GO" id="GO:0007021">
    <property type="term" value="P:tubulin complex assembly"/>
    <property type="evidence" value="ECO:0007669"/>
    <property type="project" value="InterPro"/>
</dbReference>
<dbReference type="CDD" id="cd01789">
    <property type="entry name" value="Ubl_TBCB"/>
    <property type="match status" value="1"/>
</dbReference>
<dbReference type="FunFam" id="3.10.20.90:FF:000217">
    <property type="entry name" value="Tubulin folding cofactor B"/>
    <property type="match status" value="1"/>
</dbReference>
<dbReference type="FunFam" id="2.30.30.190:FF:000013">
    <property type="entry name" value="Tubulin-folding cofactor B"/>
    <property type="match status" value="1"/>
</dbReference>
<dbReference type="Gene3D" id="2.30.30.190">
    <property type="entry name" value="CAP Gly-rich-like domain"/>
    <property type="match status" value="1"/>
</dbReference>
<dbReference type="Gene3D" id="3.10.20.90">
    <property type="entry name" value="Phosphatidylinositol 3-kinase Catalytic Subunit, Chain A, domain 1"/>
    <property type="match status" value="1"/>
</dbReference>
<dbReference type="InterPro" id="IPR036859">
    <property type="entry name" value="CAP-Gly_dom_sf"/>
</dbReference>
<dbReference type="InterPro" id="IPR000938">
    <property type="entry name" value="CAP-Gly_domain"/>
</dbReference>
<dbReference type="InterPro" id="IPR045172">
    <property type="entry name" value="TBCB_Ubl"/>
</dbReference>
<dbReference type="InterPro" id="IPR000626">
    <property type="entry name" value="Ubiquitin-like_dom"/>
</dbReference>
<dbReference type="InterPro" id="IPR029071">
    <property type="entry name" value="Ubiquitin-like_domsf"/>
</dbReference>
<dbReference type="PANTHER" id="PTHR18916">
    <property type="entry name" value="DYNACTIN 1-RELATED MICROTUBULE-BINDING"/>
    <property type="match status" value="1"/>
</dbReference>
<dbReference type="PANTHER" id="PTHR18916:SF85">
    <property type="entry name" value="TUBULIN-FOLDING COFACTOR B"/>
    <property type="match status" value="1"/>
</dbReference>
<dbReference type="Pfam" id="PF01302">
    <property type="entry name" value="CAP_GLY"/>
    <property type="match status" value="1"/>
</dbReference>
<dbReference type="Pfam" id="PF14560">
    <property type="entry name" value="Ubiquitin_2"/>
    <property type="match status" value="1"/>
</dbReference>
<dbReference type="SMART" id="SM01052">
    <property type="entry name" value="CAP_GLY"/>
    <property type="match status" value="1"/>
</dbReference>
<dbReference type="SUPFAM" id="SSF74924">
    <property type="entry name" value="Cap-Gly domain"/>
    <property type="match status" value="1"/>
</dbReference>
<dbReference type="SUPFAM" id="SSF54236">
    <property type="entry name" value="Ubiquitin-like"/>
    <property type="match status" value="1"/>
</dbReference>
<dbReference type="PROSITE" id="PS00845">
    <property type="entry name" value="CAP_GLY_1"/>
    <property type="match status" value="1"/>
</dbReference>
<dbReference type="PROSITE" id="PS50245">
    <property type="entry name" value="CAP_GLY_2"/>
    <property type="match status" value="1"/>
</dbReference>
<protein>
    <recommendedName>
        <fullName>Tubulin-folding cofactor B</fullName>
    </recommendedName>
    <alternativeName>
        <fullName>Cytoskeleton-associated protein 1</fullName>
    </alternativeName>
    <alternativeName>
        <fullName>Cytoskeleton-associated protein CKAPI</fullName>
    </alternativeName>
    <alternativeName>
        <fullName>Tubulin-specific chaperone B</fullName>
    </alternativeName>
</protein>
<proteinExistence type="evidence at protein level"/>
<evidence type="ECO:0000250" key="1">
    <source>
        <dbReference type="UniProtKB" id="Q99426"/>
    </source>
</evidence>
<evidence type="ECO:0000255" key="2">
    <source>
        <dbReference type="PROSITE-ProRule" id="PRU00045"/>
    </source>
</evidence>
<evidence type="ECO:0000269" key="3">
    <source>
    </source>
</evidence>
<evidence type="ECO:0000269" key="4">
    <source>
    </source>
</evidence>
<evidence type="ECO:0000305" key="5"/>
<evidence type="ECO:0007744" key="6">
    <source>
    </source>
</evidence>
<evidence type="ECO:0007744" key="7">
    <source>
    </source>
</evidence>
<evidence type="ECO:0007829" key="8">
    <source>
        <dbReference type="PDB" id="1V6E"/>
    </source>
</evidence>
<evidence type="ECO:0007829" key="9">
    <source>
        <dbReference type="PDB" id="1WHG"/>
    </source>
</evidence>
<sequence>MEVTGISAPTVMVFISSSLNSFRSEKRYSRSLTIAEFKCKLELVVGSPASCMELELYGADDKFYSKLDQEDALLGSYPVDDGCRIHVIDHSGVRLGEYEDVSKVEKYEISPEAYERRQNTVRSFMKRSKLGPYNEELRAQQEAEAAQRLSEEKAQASAISVGSRCEVRAPDHSLRRGTVMYVGLTDFKPGYWVGVRYDEPLGKNDGSVNGKRYFECQAKYGAFVKPSAVTVGDFPEEDYGLDEM</sequence>
<comment type="function">
    <text evidence="1 3 4">Binds to alpha-tubulin folding intermediates after their interaction with cytosolic chaperonin in the pathway leading from newly synthesized tubulin to properly folded heterodimer (By similarity). Involved in regulation of tubulin heterodimer dissociation (PubMed:17184771). May function as a negative regulator of axonal growth (PubMed:17217416).</text>
</comment>
<comment type="subunit">
    <text evidence="1 3">Supercomplex made of cofactors A to E. Cofactors A and D function by capturing and stabilizing tubulin in a quasi-native conformation. Cofactor E binds to the cofactor D-tubulin complex; interaction with cofactor C then causes the release of tubulin polypeptides that are committed to the native state (By similarity). Cofactors B and E can form a heterodimer which binds to alpha-tubulin and enhances their ability to dissociate tubulin heterodimers (PubMed:17184771). Interacts with GAN. Interacts with DCTN1 (By similarity).</text>
</comment>
<comment type="subcellular location">
    <subcellularLocation>
        <location evidence="4">Cytoplasm</location>
    </subcellularLocation>
    <subcellularLocation>
        <location evidence="4">Cytoplasm</location>
        <location evidence="4">Cytoskeleton</location>
    </subcellularLocation>
    <text evidence="4">Colocalizes with microtubules. In differentiated neurons, located in the cytoplasm. In differentiating neurons, accumulates at the growth cone.</text>
</comment>
<comment type="tissue specificity">
    <text evidence="4">Widely expressed with highest levels in brain. Broadly distributed throughout the neonate brain but restricted mainly to ependymary cells in the adult brain where it is concentrated in the cilia.</text>
</comment>
<comment type="developmental stage">
    <text evidence="4">In the embryo, expression increases at 12.5 dpc-14.5 dpc. Levels are highest in pre- and postnatal stages which coincide with peaks of cerebral and cerebellar neurogenesis (at protein level).</text>
</comment>
<comment type="PTM">
    <text evidence="1">Phosphorylation by PAK1 is required for normal function.</text>
</comment>
<comment type="PTM">
    <text evidence="1">Ubiquitinated in the presence of GAN which targets it for degradation by the proteasome.</text>
</comment>
<comment type="disruption phenotype">
    <text evidence="4">Mice display significantly longer axons than wild-type mice. Overexpression of Tbcb causes microtubule depolymerization, growth cone retraction and axonal damage followed by neuronal degeneration.</text>
</comment>
<comment type="similarity">
    <text evidence="5">Belongs to the TBCB family.</text>
</comment>
<accession>Q9D1E6</accession>
<accession>Q9CWR6</accession>
<accession>Q9DCZ6</accession>
<feature type="chain" id="PRO_0000083535" description="Tubulin-folding cofactor B">
    <location>
        <begin position="1"/>
        <end position="244"/>
    </location>
</feature>
<feature type="domain" description="CAP-Gly" evidence="2">
    <location>
        <begin position="183"/>
        <end position="225"/>
    </location>
</feature>
<feature type="modified residue" description="N-acetylmethionine" evidence="1">
    <location>
        <position position="1"/>
    </location>
</feature>
<feature type="modified residue" description="Phosphoserine; by PAK1" evidence="1">
    <location>
        <position position="65"/>
    </location>
</feature>
<feature type="modified residue" description="Phosphotyrosine" evidence="6">
    <location>
        <position position="98"/>
    </location>
</feature>
<feature type="modified residue" description="Phosphoserine" evidence="7">
    <location>
        <position position="110"/>
    </location>
</feature>
<feature type="modified residue" description="Phosphoserine; by PAK1" evidence="1">
    <location>
        <position position="128"/>
    </location>
</feature>
<feature type="modified residue" description="N6-acetyllysine" evidence="1">
    <location>
        <position position="219"/>
    </location>
</feature>
<feature type="sequence conflict" description="In Ref. 1; BAB26939." evidence="5" ref="1">
    <original>R</original>
    <variation>S</variation>
    <location>
        <position position="84"/>
    </location>
</feature>
<feature type="strand" evidence="8">
    <location>
        <begin position="11"/>
        <end position="17"/>
    </location>
</feature>
<feature type="strand" evidence="8">
    <location>
        <begin position="20"/>
        <end position="22"/>
    </location>
</feature>
<feature type="strand" evidence="8">
    <location>
        <begin position="24"/>
        <end position="28"/>
    </location>
</feature>
<feature type="helix" evidence="8">
    <location>
        <begin position="34"/>
        <end position="44"/>
    </location>
</feature>
<feature type="turn" evidence="8">
    <location>
        <begin position="49"/>
        <end position="51"/>
    </location>
</feature>
<feature type="strand" evidence="8">
    <location>
        <begin position="55"/>
        <end position="57"/>
    </location>
</feature>
<feature type="strand" evidence="8">
    <location>
        <begin position="59"/>
        <end position="61"/>
    </location>
</feature>
<feature type="strand" evidence="8">
    <location>
        <begin position="63"/>
        <end position="66"/>
    </location>
</feature>
<feature type="strand" evidence="8">
    <location>
        <begin position="70"/>
        <end position="73"/>
    </location>
</feature>
<feature type="strand" evidence="8">
    <location>
        <begin position="76"/>
        <end position="78"/>
    </location>
</feature>
<feature type="strand" evidence="8">
    <location>
        <begin position="84"/>
        <end position="88"/>
    </location>
</feature>
<feature type="helix" evidence="9">
    <location>
        <begin position="137"/>
        <end position="147"/>
    </location>
</feature>
<feature type="helix" evidence="9">
    <location>
        <begin position="150"/>
        <end position="156"/>
    </location>
</feature>
<feature type="strand" evidence="9">
    <location>
        <begin position="164"/>
        <end position="167"/>
    </location>
</feature>
<feature type="strand" evidence="9">
    <location>
        <begin position="170"/>
        <end position="173"/>
    </location>
</feature>
<feature type="strand" evidence="9">
    <location>
        <begin position="175"/>
        <end position="184"/>
    </location>
</feature>
<feature type="strand" evidence="9">
    <location>
        <begin position="186"/>
        <end position="200"/>
    </location>
</feature>
<feature type="strand" evidence="9">
    <location>
        <begin position="206"/>
        <end position="208"/>
    </location>
</feature>
<feature type="turn" evidence="9">
    <location>
        <begin position="218"/>
        <end position="220"/>
    </location>
</feature>
<feature type="strand" evidence="9">
    <location>
        <begin position="221"/>
        <end position="224"/>
    </location>
</feature>
<feature type="helix" evidence="9">
    <location>
        <begin position="226"/>
        <end position="228"/>
    </location>
</feature>
<feature type="strand" evidence="9">
    <location>
        <begin position="229"/>
        <end position="233"/>
    </location>
</feature>
<gene>
    <name type="primary">Tbcb</name>
    <name type="synonym">Ckap1</name>
</gene>
<name>TBCB_MOUSE</name>